<name>RIHB_ECOSE</name>
<evidence type="ECO:0000255" key="1">
    <source>
        <dbReference type="HAMAP-Rule" id="MF_01433"/>
    </source>
</evidence>
<feature type="chain" id="PRO_1000145833" description="Pyrimidine-specific ribonucleoside hydrolase RihB">
    <location>
        <begin position="1"/>
        <end position="313"/>
    </location>
</feature>
<feature type="active site" description="Proton acceptor" evidence="1">
    <location>
        <position position="11"/>
    </location>
</feature>
<feature type="binding site" evidence="1">
    <location>
        <position position="11"/>
    </location>
    <ligand>
        <name>Ca(2+)</name>
        <dbReference type="ChEBI" id="CHEBI:29108"/>
    </ligand>
</feature>
<feature type="binding site" evidence="1">
    <location>
        <position position="16"/>
    </location>
    <ligand>
        <name>Ca(2+)</name>
        <dbReference type="ChEBI" id="CHEBI:29108"/>
    </ligand>
</feature>
<feature type="binding site" evidence="1">
    <location>
        <position position="124"/>
    </location>
    <ligand>
        <name>Ca(2+)</name>
        <dbReference type="ChEBI" id="CHEBI:29108"/>
    </ligand>
</feature>
<feature type="binding site" evidence="1">
    <location>
        <position position="227"/>
    </location>
    <ligand>
        <name>substrate</name>
    </ligand>
</feature>
<feature type="binding site" evidence="1">
    <location>
        <position position="239"/>
    </location>
    <ligand>
        <name>substrate</name>
    </ligand>
</feature>
<feature type="binding site" evidence="1">
    <location>
        <position position="240"/>
    </location>
    <ligand>
        <name>Ca(2+)</name>
        <dbReference type="ChEBI" id="CHEBI:29108"/>
    </ligand>
</feature>
<reference key="1">
    <citation type="journal article" date="2008" name="DNA Res.">
        <title>Complete genome sequence and comparative analysis of the wild-type commensal Escherichia coli strain SE11 isolated from a healthy adult.</title>
        <authorList>
            <person name="Oshima K."/>
            <person name="Toh H."/>
            <person name="Ogura Y."/>
            <person name="Sasamoto H."/>
            <person name="Morita H."/>
            <person name="Park S.-H."/>
            <person name="Ooka T."/>
            <person name="Iyoda S."/>
            <person name="Taylor T.D."/>
            <person name="Hayashi T."/>
            <person name="Itoh K."/>
            <person name="Hattori M."/>
        </authorList>
    </citation>
    <scope>NUCLEOTIDE SEQUENCE [LARGE SCALE GENOMIC DNA]</scope>
    <source>
        <strain>SE11</strain>
    </source>
</reference>
<organism>
    <name type="scientific">Escherichia coli (strain SE11)</name>
    <dbReference type="NCBI Taxonomy" id="409438"/>
    <lineage>
        <taxon>Bacteria</taxon>
        <taxon>Pseudomonadati</taxon>
        <taxon>Pseudomonadota</taxon>
        <taxon>Gammaproteobacteria</taxon>
        <taxon>Enterobacterales</taxon>
        <taxon>Enterobacteriaceae</taxon>
        <taxon>Escherichia</taxon>
    </lineage>
</organism>
<accession>B6I8L3</accession>
<proteinExistence type="inferred from homology"/>
<comment type="function">
    <text evidence="1">Hydrolyzes cytidine or uridine to ribose and cytosine or uracil, respectively. Has a clear preference for cytidine over uridine. Strictly specific for ribonucleosides.</text>
</comment>
<comment type="catalytic activity">
    <reaction evidence="1">
        <text>a pyrimidine ribonucleoside + H2O = a pyrimidine nucleobase + D-ribose</text>
        <dbReference type="Rhea" id="RHEA:56816"/>
        <dbReference type="ChEBI" id="CHEBI:15377"/>
        <dbReference type="ChEBI" id="CHEBI:26432"/>
        <dbReference type="ChEBI" id="CHEBI:47013"/>
        <dbReference type="ChEBI" id="CHEBI:141014"/>
        <dbReference type="EC" id="3.2.2.8"/>
    </reaction>
</comment>
<comment type="cofactor">
    <cofactor evidence="1">
        <name>Ca(2+)</name>
        <dbReference type="ChEBI" id="CHEBI:29108"/>
    </cofactor>
    <text evidence="1">Binds 1 Ca(2+) ion per monomer.</text>
</comment>
<comment type="subunit">
    <text evidence="1">Homotetramer.</text>
</comment>
<comment type="similarity">
    <text evidence="1">Belongs to the IUNH family. RihB subfamily.</text>
</comment>
<sequence length="313" mass="33738">MEKRKIILDCDSGHDDAIAIMMAAKHPAIDLLGITIVAGNQTLDKTLINGLNVCQKLEINVPVYAGMPQPIMRQQIVADNIHGETGLDGPVFEPLTRQAESTHAVKYIIDTLMASDGDITLVPVGPLSNIAVAMRMQPAILPKIREIVLMGGAYGTGNFTPSAEFNIFADPEAARVVFTSGVPLVMMGLDLTNQTVCTPDVIARMERAGGPAGELFSDIMNFTLKTQFENYGLAGGPVHDATCIGYLINPDGIKTQEMYVEVDVNSGPCYGRTVCDELGVLGKPANTKVGITIDTDWFWGLVEECVRGYIKTH</sequence>
<dbReference type="EC" id="3.2.2.8" evidence="1"/>
<dbReference type="EMBL" id="AP009240">
    <property type="protein sequence ID" value="BAG77954.1"/>
    <property type="molecule type" value="Genomic_DNA"/>
</dbReference>
<dbReference type="RefSeq" id="WP_000415460.1">
    <property type="nucleotide sequence ID" value="NC_011415.1"/>
</dbReference>
<dbReference type="SMR" id="B6I8L3"/>
<dbReference type="KEGG" id="ecy:ECSE_2430"/>
<dbReference type="HOGENOM" id="CLU_036838_2_0_6"/>
<dbReference type="Proteomes" id="UP000008199">
    <property type="component" value="Chromosome"/>
</dbReference>
<dbReference type="GO" id="GO:0005829">
    <property type="term" value="C:cytosol"/>
    <property type="evidence" value="ECO:0007669"/>
    <property type="project" value="TreeGrafter"/>
</dbReference>
<dbReference type="GO" id="GO:0005509">
    <property type="term" value="F:calcium ion binding"/>
    <property type="evidence" value="ECO:0007669"/>
    <property type="project" value="UniProtKB-UniRule"/>
</dbReference>
<dbReference type="GO" id="GO:0008477">
    <property type="term" value="F:purine nucleosidase activity"/>
    <property type="evidence" value="ECO:0007669"/>
    <property type="project" value="TreeGrafter"/>
</dbReference>
<dbReference type="GO" id="GO:0050263">
    <property type="term" value="F:ribosylpyrimidine nucleosidase activity"/>
    <property type="evidence" value="ECO:0007669"/>
    <property type="project" value="UniProtKB-UniRule"/>
</dbReference>
<dbReference type="GO" id="GO:0006152">
    <property type="term" value="P:purine nucleoside catabolic process"/>
    <property type="evidence" value="ECO:0007669"/>
    <property type="project" value="TreeGrafter"/>
</dbReference>
<dbReference type="GO" id="GO:0006206">
    <property type="term" value="P:pyrimidine nucleobase metabolic process"/>
    <property type="evidence" value="ECO:0007669"/>
    <property type="project" value="UniProtKB-UniRule"/>
</dbReference>
<dbReference type="GO" id="GO:0046133">
    <property type="term" value="P:pyrimidine ribonucleoside catabolic process"/>
    <property type="evidence" value="ECO:0007669"/>
    <property type="project" value="InterPro"/>
</dbReference>
<dbReference type="CDD" id="cd02651">
    <property type="entry name" value="nuc_hydro_IU_UC_XIUA"/>
    <property type="match status" value="1"/>
</dbReference>
<dbReference type="FunFam" id="3.90.245.10:FF:000003">
    <property type="entry name" value="Pyrimidine-specific ribonucleoside hydrolase RihB"/>
    <property type="match status" value="1"/>
</dbReference>
<dbReference type="Gene3D" id="3.90.245.10">
    <property type="entry name" value="Ribonucleoside hydrolase-like"/>
    <property type="match status" value="1"/>
</dbReference>
<dbReference type="HAMAP" id="MF_01433">
    <property type="entry name" value="Pyrim_hydro_RihB"/>
    <property type="match status" value="1"/>
</dbReference>
<dbReference type="InterPro" id="IPR001910">
    <property type="entry name" value="Inosine/uridine_hydrolase_dom"/>
</dbReference>
<dbReference type="InterPro" id="IPR023186">
    <property type="entry name" value="IUNH"/>
</dbReference>
<dbReference type="InterPro" id="IPR022977">
    <property type="entry name" value="Pyrim_hydro_RihB"/>
</dbReference>
<dbReference type="InterPro" id="IPR036452">
    <property type="entry name" value="Ribo_hydro-like"/>
</dbReference>
<dbReference type="NCBIfam" id="NF007417">
    <property type="entry name" value="PRK09955.1"/>
    <property type="match status" value="1"/>
</dbReference>
<dbReference type="PANTHER" id="PTHR12304">
    <property type="entry name" value="INOSINE-URIDINE PREFERRING NUCLEOSIDE HYDROLASE"/>
    <property type="match status" value="1"/>
</dbReference>
<dbReference type="PANTHER" id="PTHR12304:SF4">
    <property type="entry name" value="URIDINE NUCLEOSIDASE"/>
    <property type="match status" value="1"/>
</dbReference>
<dbReference type="Pfam" id="PF01156">
    <property type="entry name" value="IU_nuc_hydro"/>
    <property type="match status" value="1"/>
</dbReference>
<dbReference type="SUPFAM" id="SSF53590">
    <property type="entry name" value="Nucleoside hydrolase"/>
    <property type="match status" value="1"/>
</dbReference>
<keyword id="KW-0106">Calcium</keyword>
<keyword id="KW-0326">Glycosidase</keyword>
<keyword id="KW-0378">Hydrolase</keyword>
<keyword id="KW-0479">Metal-binding</keyword>
<gene>
    <name evidence="1" type="primary">rihB</name>
    <name type="ordered locus">ECSE_2430</name>
</gene>
<protein>
    <recommendedName>
        <fullName evidence="1">Pyrimidine-specific ribonucleoside hydrolase RihB</fullName>
        <ecNumber evidence="1">3.2.2.8</ecNumber>
    </recommendedName>
    <alternativeName>
        <fullName evidence="1">Cytidine/uridine-specific hydrolase</fullName>
    </alternativeName>
</protein>